<proteinExistence type="evidence at transcript level"/>
<dbReference type="EMBL" id="BC072877">
    <property type="protein sequence ID" value="AAH72877.1"/>
    <property type="status" value="ALT_SEQ"/>
    <property type="molecule type" value="mRNA"/>
</dbReference>
<dbReference type="EMBL" id="BC100207">
    <property type="protein sequence ID" value="AAI00208.1"/>
    <property type="status" value="ALT_INIT"/>
    <property type="molecule type" value="mRNA"/>
</dbReference>
<dbReference type="SMR" id="Q6GQ71"/>
<dbReference type="GeneID" id="443588"/>
<dbReference type="KEGG" id="xla:443588"/>
<dbReference type="AGR" id="Xenbase:XB-GENE-6252105"/>
<dbReference type="CTD" id="443588"/>
<dbReference type="Xenbase" id="XB-GENE-6252105">
    <property type="gene designation" value="nuf2.S"/>
</dbReference>
<dbReference type="OrthoDB" id="8194677at2759"/>
<dbReference type="Proteomes" id="UP000186698">
    <property type="component" value="Chromosome 4S"/>
</dbReference>
<dbReference type="Bgee" id="443588">
    <property type="expression patterns" value="Expressed in blastula and 11 other cell types or tissues"/>
</dbReference>
<dbReference type="GO" id="GO:0031262">
    <property type="term" value="C:Ndc80 complex"/>
    <property type="evidence" value="ECO:0000250"/>
    <property type="project" value="UniProtKB"/>
</dbReference>
<dbReference type="GO" id="GO:0005634">
    <property type="term" value="C:nucleus"/>
    <property type="evidence" value="ECO:0007669"/>
    <property type="project" value="UniProtKB-SubCell"/>
</dbReference>
<dbReference type="GO" id="GO:0044877">
    <property type="term" value="F:protein-containing complex binding"/>
    <property type="evidence" value="ECO:0007669"/>
    <property type="project" value="TreeGrafter"/>
</dbReference>
<dbReference type="GO" id="GO:0051315">
    <property type="term" value="P:attachment of mitotic spindle microtubules to kinetochore"/>
    <property type="evidence" value="ECO:0007669"/>
    <property type="project" value="TreeGrafter"/>
</dbReference>
<dbReference type="GO" id="GO:0051301">
    <property type="term" value="P:cell division"/>
    <property type="evidence" value="ECO:0007669"/>
    <property type="project" value="UniProtKB-KW"/>
</dbReference>
<dbReference type="GO" id="GO:0051383">
    <property type="term" value="P:kinetochore organization"/>
    <property type="evidence" value="ECO:0007669"/>
    <property type="project" value="TreeGrafter"/>
</dbReference>
<dbReference type="GO" id="GO:0045132">
    <property type="term" value="P:meiotic chromosome segregation"/>
    <property type="evidence" value="ECO:0007669"/>
    <property type="project" value="TreeGrafter"/>
</dbReference>
<dbReference type="GO" id="GO:0007052">
    <property type="term" value="P:mitotic spindle organization"/>
    <property type="evidence" value="ECO:0007669"/>
    <property type="project" value="TreeGrafter"/>
</dbReference>
<dbReference type="Gene3D" id="1.10.418.60">
    <property type="entry name" value="Ncd80 complex, Nuf2 subunit"/>
    <property type="match status" value="1"/>
</dbReference>
<dbReference type="InterPro" id="IPR005549">
    <property type="entry name" value="Kinetochore_Nuf2_N"/>
</dbReference>
<dbReference type="InterPro" id="IPR038275">
    <property type="entry name" value="Nuf2_N_sf"/>
</dbReference>
<dbReference type="PANTHER" id="PTHR21650:SF2">
    <property type="entry name" value="KINETOCHORE PROTEIN NUF2"/>
    <property type="match status" value="1"/>
</dbReference>
<dbReference type="PANTHER" id="PTHR21650">
    <property type="entry name" value="MEMBRALIN/KINETOCHORE PROTEIN NUF2"/>
    <property type="match status" value="1"/>
</dbReference>
<dbReference type="Pfam" id="PF03800">
    <property type="entry name" value="Nuf2"/>
    <property type="match status" value="1"/>
</dbReference>
<reference key="1">
    <citation type="submission" date="2004-06" db="EMBL/GenBank/DDBJ databases">
        <authorList>
            <consortium name="NIH - Xenopus Gene Collection (XGC) project"/>
        </authorList>
    </citation>
    <scope>NUCLEOTIDE SEQUENCE [LARGE SCALE MRNA]</scope>
    <source>
        <tissue>Ovary</tissue>
    </source>
</reference>
<accession>Q6GQ71</accession>
<accession>Q498I2</accession>
<sequence>MDKLTFPIFPAADLVNFFRQNILTGTEAKNFNKNDLYPNPKPEMVQKLYMRILQQVFSYGVEQFYMVPMDLDIQYPHLVEGFAPVANILKLMARLLPMCRVYDFHPSDVLNPKGKRTLHLLSGIFNFLQFRTTQREVYMEYCSGYKSALENVRQLQKTNHEAEIKIEKLTTVPPEQQAEFKALSSEIHDLQQIISQEYRAKDVMFQEKIAQRKAEFAEKNKRLNEQKLTIATMKEEQERMKSQIVESPEQRKSKTERMKETVHRLKQARQETSDKCDHYRDRVALAFMWQSDVQGYLKKLQNIDANLEIHRKIHEEIRHIEEQLMNLNLELKSLSNEDAQLKRIILVKKEKLAKVDIKNKKKQEDFNQQKQEILEVCSHIQEKRQVIHGRVAQVLQEIQQTISKKEQLLETTEAGKNKCQEVITDFRAALEKYHDSLQKASERSADRRREKIAELNRRLSRQ</sequence>
<gene>
    <name type="primary">nuf2-b</name>
    <name type="synonym">cdca1-b</name>
</gene>
<protein>
    <recommendedName>
        <fullName>Kinetochore protein Nuf2-B</fullName>
    </recommendedName>
    <alternativeName>
        <fullName>Cell division cycle-associated protein 1-B</fullName>
    </alternativeName>
</protein>
<feature type="chain" id="PRO_0000249819" description="Kinetochore protein Nuf2-B">
    <location>
        <begin position="1"/>
        <end position="462"/>
    </location>
</feature>
<feature type="region of interest" description="Disordered" evidence="4">
    <location>
        <begin position="236"/>
        <end position="259"/>
    </location>
</feature>
<feature type="coiled-coil region" evidence="3">
    <location>
        <begin position="143"/>
        <end position="462"/>
    </location>
</feature>
<feature type="compositionally biased region" description="Basic and acidic residues" evidence="4">
    <location>
        <begin position="248"/>
        <end position="259"/>
    </location>
</feature>
<feature type="sequence conflict" description="In Ref. 1; AAH72877." evidence="5" ref="1">
    <original>R</original>
    <variation>H</variation>
    <location>
        <position position="390"/>
    </location>
</feature>
<feature type="sequence conflict" description="In Ref. 1; AAH72877." evidence="5" ref="1">
    <original>I</original>
    <variation>V</variation>
    <location>
        <position position="423"/>
    </location>
</feature>
<keyword id="KW-0131">Cell cycle</keyword>
<keyword id="KW-0132">Cell division</keyword>
<keyword id="KW-0137">Centromere</keyword>
<keyword id="KW-0158">Chromosome</keyword>
<keyword id="KW-0175">Coiled coil</keyword>
<keyword id="KW-0995">Kinetochore</keyword>
<keyword id="KW-0498">Mitosis</keyword>
<keyword id="KW-0539">Nucleus</keyword>
<keyword id="KW-1185">Reference proteome</keyword>
<name>NUF2B_XENLA</name>
<organism>
    <name type="scientific">Xenopus laevis</name>
    <name type="common">African clawed frog</name>
    <dbReference type="NCBI Taxonomy" id="8355"/>
    <lineage>
        <taxon>Eukaryota</taxon>
        <taxon>Metazoa</taxon>
        <taxon>Chordata</taxon>
        <taxon>Craniata</taxon>
        <taxon>Vertebrata</taxon>
        <taxon>Euteleostomi</taxon>
        <taxon>Amphibia</taxon>
        <taxon>Batrachia</taxon>
        <taxon>Anura</taxon>
        <taxon>Pipoidea</taxon>
        <taxon>Pipidae</taxon>
        <taxon>Xenopodinae</taxon>
        <taxon>Xenopus</taxon>
        <taxon>Xenopus</taxon>
    </lineage>
</organism>
<comment type="function">
    <text evidence="2">Acts as a component of the essential kinetochore-associated NDC80 complex, which is required for chromosome segregation and spindle checkpoint activity. Required for kinetochore integrity and the organization of stable microtubule binding sites in the outer plate of the kinetochore. The NDC80 complex synergistically enhances the affinity of the SKA1 complex for microtubules and may allow the NDC80 complex to track depolymerizing microtubules.</text>
</comment>
<comment type="subunit">
    <text evidence="1">Component of the NDC80 complex, which is composed of ndc80, cdca1, spbc24 and spbc25. The NDC80 complex interacts with mis12 and zwint (By similarity).</text>
</comment>
<comment type="subcellular location">
    <subcellularLocation>
        <location evidence="1">Nucleus</location>
    </subcellularLocation>
    <subcellularLocation>
        <location evidence="1">Chromosome</location>
        <location evidence="1">Centromere</location>
        <location evidence="1">Kinetochore</location>
    </subcellularLocation>
    <text evidence="1">Localizes to kinetochores from late prophase to anaphase.</text>
</comment>
<comment type="similarity">
    <text evidence="5">Belongs to the NUF2 family.</text>
</comment>
<comment type="sequence caution" evidence="5">
    <conflict type="miscellaneous discrepancy">
        <sequence resource="EMBL-CDS" id="AAH72877"/>
    </conflict>
    <text>Contaminating sequence. Potential poly-A sequence.</text>
</comment>
<comment type="sequence caution" evidence="5">
    <conflict type="erroneous initiation">
        <sequence resource="EMBL-CDS" id="AAI00208"/>
    </conflict>
</comment>
<evidence type="ECO:0000250" key="1"/>
<evidence type="ECO:0000250" key="2">
    <source>
        <dbReference type="UniProtKB" id="Q9BZD4"/>
    </source>
</evidence>
<evidence type="ECO:0000255" key="3"/>
<evidence type="ECO:0000256" key="4">
    <source>
        <dbReference type="SAM" id="MobiDB-lite"/>
    </source>
</evidence>
<evidence type="ECO:0000305" key="5"/>